<organism>
    <name type="scientific">Mycobacterium tuberculosis (strain ATCC 25177 / H37Ra)</name>
    <dbReference type="NCBI Taxonomy" id="419947"/>
    <lineage>
        <taxon>Bacteria</taxon>
        <taxon>Bacillati</taxon>
        <taxon>Actinomycetota</taxon>
        <taxon>Actinomycetes</taxon>
        <taxon>Mycobacteriales</taxon>
        <taxon>Mycobacteriaceae</taxon>
        <taxon>Mycobacterium</taxon>
        <taxon>Mycobacterium tuberculosis complex</taxon>
    </lineage>
</organism>
<feature type="chain" id="PRO_0000337733" description="Bifunctional protein GlmU">
    <location>
        <begin position="1"/>
        <end position="495"/>
    </location>
</feature>
<feature type="region of interest" description="Pyrophosphorylase" evidence="1 2">
    <location>
        <begin position="1"/>
        <end position="241"/>
    </location>
</feature>
<feature type="region of interest" description="Linker" evidence="1 2">
    <location>
        <begin position="242"/>
        <end position="262"/>
    </location>
</feature>
<feature type="region of interest" description="N-acetyltransferase" evidence="1 2">
    <location>
        <begin position="263"/>
        <end position="495"/>
    </location>
</feature>
<feature type="region of interest" description="Disordered" evidence="3">
    <location>
        <begin position="457"/>
        <end position="495"/>
    </location>
</feature>
<feature type="compositionally biased region" description="Low complexity" evidence="3">
    <location>
        <begin position="483"/>
        <end position="495"/>
    </location>
</feature>
<feature type="active site" description="Proton acceptor" evidence="1 2">
    <location>
        <position position="374"/>
    </location>
</feature>
<feature type="binding site" evidence="1 2">
    <location>
        <begin position="12"/>
        <end position="15"/>
    </location>
    <ligand>
        <name>UDP-N-acetyl-alpha-D-glucosamine</name>
        <dbReference type="ChEBI" id="CHEBI:57705"/>
    </ligand>
</feature>
<feature type="binding site" evidence="1 2">
    <location>
        <position position="26"/>
    </location>
    <ligand>
        <name>UDP-N-acetyl-alpha-D-glucosamine</name>
        <dbReference type="ChEBI" id="CHEBI:57705"/>
    </ligand>
</feature>
<feature type="binding site" evidence="1 2">
    <location>
        <position position="83"/>
    </location>
    <ligand>
        <name>UDP-N-acetyl-alpha-D-glucosamine</name>
        <dbReference type="ChEBI" id="CHEBI:57705"/>
    </ligand>
</feature>
<feature type="binding site" evidence="1 2">
    <location>
        <begin position="88"/>
        <end position="89"/>
    </location>
    <ligand>
        <name>UDP-N-acetyl-alpha-D-glucosamine</name>
        <dbReference type="ChEBI" id="CHEBI:57705"/>
    </ligand>
</feature>
<feature type="binding site" evidence="1 2">
    <location>
        <begin position="112"/>
        <end position="114"/>
    </location>
    <ligand>
        <name>UDP-N-acetyl-alpha-D-glucosamine</name>
        <dbReference type="ChEBI" id="CHEBI:57705"/>
    </ligand>
</feature>
<feature type="binding site" evidence="1 2">
    <location>
        <position position="114"/>
    </location>
    <ligand>
        <name>Mg(2+)</name>
        <dbReference type="ChEBI" id="CHEBI:18420"/>
    </ligand>
</feature>
<feature type="binding site" evidence="1 2">
    <location>
        <position position="151"/>
    </location>
    <ligand>
        <name>UDP-N-acetyl-alpha-D-glucosamine</name>
        <dbReference type="ChEBI" id="CHEBI:57705"/>
    </ligand>
</feature>
<feature type="binding site" evidence="1 2">
    <location>
        <position position="166"/>
    </location>
    <ligand>
        <name>UDP-N-acetyl-alpha-D-glucosamine</name>
        <dbReference type="ChEBI" id="CHEBI:57705"/>
    </ligand>
</feature>
<feature type="binding site" evidence="1 2">
    <location>
        <position position="181"/>
    </location>
    <ligand>
        <name>UDP-N-acetyl-alpha-D-glucosamine</name>
        <dbReference type="ChEBI" id="CHEBI:57705"/>
    </ligand>
</feature>
<feature type="binding site" evidence="1 2">
    <location>
        <position position="239"/>
    </location>
    <ligand>
        <name>Mg(2+)</name>
        <dbReference type="ChEBI" id="CHEBI:18420"/>
    </ligand>
</feature>
<feature type="binding site" evidence="1 2">
    <location>
        <position position="239"/>
    </location>
    <ligand>
        <name>UDP-N-acetyl-alpha-D-glucosamine</name>
        <dbReference type="ChEBI" id="CHEBI:57705"/>
    </ligand>
</feature>
<feature type="binding site" evidence="2">
    <location>
        <position position="344"/>
    </location>
    <ligand>
        <name>UDP-N-acetyl-alpha-D-glucosamine</name>
        <dbReference type="ChEBI" id="CHEBI:57705"/>
    </ligand>
</feature>
<feature type="binding site" evidence="2">
    <location>
        <position position="362"/>
    </location>
    <ligand>
        <name>UDP-N-acetyl-alpha-D-glucosamine</name>
        <dbReference type="ChEBI" id="CHEBI:57705"/>
    </ligand>
</feature>
<feature type="binding site" evidence="2">
    <location>
        <position position="377"/>
    </location>
    <ligand>
        <name>UDP-N-acetyl-alpha-D-glucosamine</name>
        <dbReference type="ChEBI" id="CHEBI:57705"/>
    </ligand>
</feature>
<feature type="binding site" evidence="2">
    <location>
        <position position="388"/>
    </location>
    <ligand>
        <name>UDP-N-acetyl-alpha-D-glucosamine</name>
        <dbReference type="ChEBI" id="CHEBI:57705"/>
    </ligand>
</feature>
<feature type="binding site" evidence="2">
    <location>
        <position position="391"/>
    </location>
    <ligand>
        <name>acetyl-CoA</name>
        <dbReference type="ChEBI" id="CHEBI:57288"/>
    </ligand>
</feature>
<feature type="binding site" evidence="1 2">
    <location>
        <begin position="397"/>
        <end position="398"/>
    </location>
    <ligand>
        <name>acetyl-CoA</name>
        <dbReference type="ChEBI" id="CHEBI:57288"/>
    </ligand>
</feature>
<feature type="binding site" evidence="1 2">
    <location>
        <position position="416"/>
    </location>
    <ligand>
        <name>acetyl-CoA</name>
        <dbReference type="ChEBI" id="CHEBI:57288"/>
    </ligand>
</feature>
<feature type="binding site" evidence="1 2">
    <location>
        <position position="434"/>
    </location>
    <ligand>
        <name>acetyl-CoA</name>
        <dbReference type="ChEBI" id="CHEBI:57288"/>
    </ligand>
</feature>
<feature type="strand" evidence="5">
    <location>
        <begin position="7"/>
        <end position="13"/>
    </location>
</feature>
<feature type="helix" evidence="5">
    <location>
        <begin position="18"/>
        <end position="20"/>
    </location>
</feature>
<feature type="helix" evidence="5">
    <location>
        <begin position="26"/>
        <end position="28"/>
    </location>
</feature>
<feature type="helix" evidence="5">
    <location>
        <begin position="36"/>
        <end position="47"/>
    </location>
</feature>
<feature type="strand" evidence="5">
    <location>
        <begin position="50"/>
        <end position="58"/>
    </location>
</feature>
<feature type="helix" evidence="5">
    <location>
        <begin position="60"/>
        <end position="63"/>
    </location>
</feature>
<feature type="turn" evidence="5">
    <location>
        <begin position="64"/>
        <end position="69"/>
    </location>
</feature>
<feature type="helix" evidence="5">
    <location>
        <begin position="70"/>
        <end position="73"/>
    </location>
</feature>
<feature type="strand" evidence="5">
    <location>
        <begin position="79"/>
        <end position="82"/>
    </location>
</feature>
<feature type="helix" evidence="5">
    <location>
        <begin position="89"/>
        <end position="97"/>
    </location>
</feature>
<feature type="strand" evidence="5">
    <location>
        <begin position="106"/>
        <end position="114"/>
    </location>
</feature>
<feature type="helix" evidence="5">
    <location>
        <begin position="120"/>
        <end position="132"/>
    </location>
</feature>
<feature type="strand" evidence="5">
    <location>
        <begin position="136"/>
        <end position="142"/>
    </location>
</feature>
<feature type="strand" evidence="5">
    <location>
        <begin position="180"/>
        <end position="187"/>
    </location>
</feature>
<feature type="helix" evidence="5">
    <location>
        <begin position="189"/>
        <end position="197"/>
    </location>
</feature>
<feature type="helix" evidence="5">
    <location>
        <begin position="212"/>
        <end position="219"/>
    </location>
</feature>
<feature type="strand" evidence="5">
    <location>
        <begin position="228"/>
        <end position="230"/>
    </location>
</feature>
<feature type="helix" evidence="5">
    <location>
        <begin position="232"/>
        <end position="235"/>
    </location>
</feature>
<feature type="helix" evidence="5">
    <location>
        <begin position="241"/>
        <end position="261"/>
    </location>
</feature>
<feature type="strand" evidence="5">
    <location>
        <begin position="265"/>
        <end position="267"/>
    </location>
</feature>
<feature type="helix" evidence="5">
    <location>
        <begin position="269"/>
        <end position="271"/>
    </location>
</feature>
<feature type="strand" evidence="5">
    <location>
        <begin position="272"/>
        <end position="274"/>
    </location>
</feature>
<feature type="strand" evidence="5">
    <location>
        <begin position="288"/>
        <end position="293"/>
    </location>
</feature>
<feature type="strand" evidence="5">
    <location>
        <begin position="309"/>
        <end position="315"/>
    </location>
</feature>
<feature type="strand" evidence="5">
    <location>
        <begin position="323"/>
        <end position="331"/>
    </location>
</feature>
<feature type="strand" evidence="5">
    <location>
        <begin position="339"/>
        <end position="343"/>
    </location>
</feature>
<feature type="strand" evidence="5">
    <location>
        <begin position="347"/>
        <end position="349"/>
    </location>
</feature>
<feature type="strand" evidence="5">
    <location>
        <begin position="354"/>
        <end position="357"/>
    </location>
</feature>
<feature type="strand" evidence="5">
    <location>
        <begin position="359"/>
        <end position="363"/>
    </location>
</feature>
<feature type="strand" evidence="5">
    <location>
        <begin position="371"/>
        <end position="375"/>
    </location>
</feature>
<feature type="strand" evidence="5">
    <location>
        <begin position="377"/>
        <end position="383"/>
    </location>
</feature>
<feature type="strand" evidence="5">
    <location>
        <begin position="394"/>
        <end position="396"/>
    </location>
</feature>
<feature type="strand" evidence="5">
    <location>
        <begin position="406"/>
        <end position="408"/>
    </location>
</feature>
<feature type="strand" evidence="5">
    <location>
        <begin position="419"/>
        <end position="423"/>
    </location>
</feature>
<feature type="helix" evidence="5">
    <location>
        <begin position="460"/>
        <end position="464"/>
    </location>
</feature>
<feature type="turn" evidence="5">
    <location>
        <begin position="466"/>
        <end position="469"/>
    </location>
</feature>
<feature type="strand" evidence="5">
    <location>
        <begin position="470"/>
        <end position="472"/>
    </location>
</feature>
<sequence>MTFPGDTAVLVLAAGPGTRMRSDTPKVLHTLAGRSMLSHVLHAIAKLAPQRLIVVLGHDHQRIAPLVGELADTLGRTIDVALQDRPLGTGHAVLCGLSALPDDYAGNVVVTSGDTPLLDADTLADLIATHRAVSAAVTVLTTTLDDPFGYGRILRTQDHEVMAIVEQTDATPSQREIREVNAGVYAFDIAALRSALSRLSSNNAQQELYLTDVIAILRSDGQTVHASHVDDSALVAGVNNRVQLAELASELNRRVVAAHQLAGVTVVDPATTWIDVDVTIGRDTVIHPGTQLLGRTQIGGRCVVGPDTTLTDVAVGDGASVVRTHGSSSSIGDGAAVGPFTYLRPGTALGADGKLGAFVEVKNSTIGTGTKVPHLTYVGDADIGEYSNIGASSVFVNYDGTSKRRTTVGSHVRTGSDTMFVAPVTIGDGAYTGAGTVVREDVPPGALAVSAGPQRNIENWVQRKRPGSPAAQASKRASEMACQQPTQPPDADQTP</sequence>
<reference key="1">
    <citation type="journal article" date="2008" name="PLoS ONE">
        <title>Genetic basis of virulence attenuation revealed by comparative genomic analysis of Mycobacterium tuberculosis strain H37Ra versus H37Rv.</title>
        <authorList>
            <person name="Zheng H."/>
            <person name="Lu L."/>
            <person name="Wang B."/>
            <person name="Pu S."/>
            <person name="Zhang X."/>
            <person name="Zhu G."/>
            <person name="Shi W."/>
            <person name="Zhang L."/>
            <person name="Wang H."/>
            <person name="Wang S."/>
            <person name="Zhao G."/>
            <person name="Zhang Y."/>
        </authorList>
    </citation>
    <scope>NUCLEOTIDE SEQUENCE [LARGE SCALE GENOMIC DNA]</scope>
    <source>
        <strain>ATCC 25177 / H37Ra</strain>
    </source>
</reference>
<reference key="2">
    <citation type="journal article" date="2009" name="J. Mol. Biol.">
        <title>PknB-mediated phosphorylation of a novel substrate, N-acetylglucosamine-1-phosphate uridyltransferase, modulates its acetyltransferase activity.</title>
        <authorList>
            <person name="Parikh A."/>
            <person name="Verma S.K."/>
            <person name="Khan S."/>
            <person name="Prakash B."/>
            <person name="Nandicoori V.K."/>
        </authorList>
    </citation>
    <scope>X-RAY CRYSTALLOGRAPHY (2.23 ANGSTROMS)</scope>
</reference>
<name>GLMU_MYCTA</name>
<dbReference type="EC" id="2.7.7.23" evidence="2"/>
<dbReference type="EC" id="2.3.1.157" evidence="2"/>
<dbReference type="EMBL" id="CP000611">
    <property type="protein sequence ID" value="ABQ72761.1"/>
    <property type="molecule type" value="Genomic_DNA"/>
</dbReference>
<dbReference type="RefSeq" id="WP_003405267.1">
    <property type="nucleotide sequence ID" value="NZ_CP016972.1"/>
</dbReference>
<dbReference type="PDB" id="3DK5">
    <property type="method" value="X-ray"/>
    <property type="resolution" value="2.23 A"/>
    <property type="chains" value="A=1-495"/>
</dbReference>
<dbReference type="PDBsum" id="3DK5"/>
<dbReference type="SMR" id="A5U161"/>
<dbReference type="KEGG" id="mra:MRA_1026"/>
<dbReference type="eggNOG" id="COG1207">
    <property type="taxonomic scope" value="Bacteria"/>
</dbReference>
<dbReference type="HOGENOM" id="CLU_029499_15_2_11"/>
<dbReference type="BRENDA" id="2.3.1.157">
    <property type="organism ID" value="3445"/>
</dbReference>
<dbReference type="BRENDA" id="2.7.7.23">
    <property type="organism ID" value="3445"/>
</dbReference>
<dbReference type="UniPathway" id="UPA00113">
    <property type="reaction ID" value="UER00532"/>
</dbReference>
<dbReference type="UniPathway" id="UPA00113">
    <property type="reaction ID" value="UER00533"/>
</dbReference>
<dbReference type="UniPathway" id="UPA00973"/>
<dbReference type="Proteomes" id="UP000001988">
    <property type="component" value="Chromosome"/>
</dbReference>
<dbReference type="GO" id="GO:0005737">
    <property type="term" value="C:cytoplasm"/>
    <property type="evidence" value="ECO:0007669"/>
    <property type="project" value="UniProtKB-SubCell"/>
</dbReference>
<dbReference type="GO" id="GO:0016020">
    <property type="term" value="C:membrane"/>
    <property type="evidence" value="ECO:0007669"/>
    <property type="project" value="GOC"/>
</dbReference>
<dbReference type="GO" id="GO:0019134">
    <property type="term" value="F:glucosamine-1-phosphate N-acetyltransferase activity"/>
    <property type="evidence" value="ECO:0007669"/>
    <property type="project" value="UniProtKB-UniRule"/>
</dbReference>
<dbReference type="GO" id="GO:0000287">
    <property type="term" value="F:magnesium ion binding"/>
    <property type="evidence" value="ECO:0007669"/>
    <property type="project" value="UniProtKB-UniRule"/>
</dbReference>
<dbReference type="GO" id="GO:0003977">
    <property type="term" value="F:UDP-N-acetylglucosamine diphosphorylase activity"/>
    <property type="evidence" value="ECO:0007669"/>
    <property type="project" value="UniProtKB-UniRule"/>
</dbReference>
<dbReference type="GO" id="GO:0000902">
    <property type="term" value="P:cell morphogenesis"/>
    <property type="evidence" value="ECO:0007669"/>
    <property type="project" value="UniProtKB-UniRule"/>
</dbReference>
<dbReference type="GO" id="GO:0071555">
    <property type="term" value="P:cell wall organization"/>
    <property type="evidence" value="ECO:0007669"/>
    <property type="project" value="UniProtKB-KW"/>
</dbReference>
<dbReference type="GO" id="GO:0009245">
    <property type="term" value="P:lipid A biosynthetic process"/>
    <property type="evidence" value="ECO:0007669"/>
    <property type="project" value="UniProtKB-UniRule"/>
</dbReference>
<dbReference type="GO" id="GO:0009252">
    <property type="term" value="P:peptidoglycan biosynthetic process"/>
    <property type="evidence" value="ECO:0007669"/>
    <property type="project" value="UniProtKB-UniRule"/>
</dbReference>
<dbReference type="GO" id="GO:0008360">
    <property type="term" value="P:regulation of cell shape"/>
    <property type="evidence" value="ECO:0007669"/>
    <property type="project" value="UniProtKB-KW"/>
</dbReference>
<dbReference type="GO" id="GO:0006048">
    <property type="term" value="P:UDP-N-acetylglucosamine biosynthetic process"/>
    <property type="evidence" value="ECO:0007669"/>
    <property type="project" value="UniProtKB-UniPathway"/>
</dbReference>
<dbReference type="CDD" id="cd02540">
    <property type="entry name" value="GT2_GlmU_N_bac"/>
    <property type="match status" value="1"/>
</dbReference>
<dbReference type="CDD" id="cd03353">
    <property type="entry name" value="LbH_GlmU_C"/>
    <property type="match status" value="1"/>
</dbReference>
<dbReference type="FunFam" id="2.160.10.10:FF:000028">
    <property type="entry name" value="Bifunctional protein GlmU"/>
    <property type="match status" value="1"/>
</dbReference>
<dbReference type="FunFam" id="3.90.550.10:FF:000006">
    <property type="entry name" value="Bifunctional protein GlmU"/>
    <property type="match status" value="1"/>
</dbReference>
<dbReference type="Gene3D" id="2.160.10.10">
    <property type="entry name" value="Hexapeptide repeat proteins"/>
    <property type="match status" value="1"/>
</dbReference>
<dbReference type="Gene3D" id="3.90.550.10">
    <property type="entry name" value="Spore Coat Polysaccharide Biosynthesis Protein SpsA, Chain A"/>
    <property type="match status" value="1"/>
</dbReference>
<dbReference type="HAMAP" id="MF_01631">
    <property type="entry name" value="GlmU"/>
    <property type="match status" value="1"/>
</dbReference>
<dbReference type="InterPro" id="IPR005882">
    <property type="entry name" value="Bifunctional_GlmU"/>
</dbReference>
<dbReference type="InterPro" id="IPR050065">
    <property type="entry name" value="GlmU-like"/>
</dbReference>
<dbReference type="InterPro" id="IPR038009">
    <property type="entry name" value="GlmU_C_LbH"/>
</dbReference>
<dbReference type="InterPro" id="IPR001451">
    <property type="entry name" value="Hexapep"/>
</dbReference>
<dbReference type="InterPro" id="IPR025877">
    <property type="entry name" value="MobA-like_NTP_Trfase"/>
</dbReference>
<dbReference type="InterPro" id="IPR029044">
    <property type="entry name" value="Nucleotide-diphossugar_trans"/>
</dbReference>
<dbReference type="InterPro" id="IPR011004">
    <property type="entry name" value="Trimer_LpxA-like_sf"/>
</dbReference>
<dbReference type="NCBIfam" id="TIGR01173">
    <property type="entry name" value="glmU"/>
    <property type="match status" value="1"/>
</dbReference>
<dbReference type="NCBIfam" id="NF010932">
    <property type="entry name" value="PRK14352.1"/>
    <property type="match status" value="1"/>
</dbReference>
<dbReference type="PANTHER" id="PTHR43584:SF3">
    <property type="entry name" value="BIFUNCTIONAL PROTEIN GLMU"/>
    <property type="match status" value="1"/>
</dbReference>
<dbReference type="PANTHER" id="PTHR43584">
    <property type="entry name" value="NUCLEOTIDYL TRANSFERASE"/>
    <property type="match status" value="1"/>
</dbReference>
<dbReference type="Pfam" id="PF00132">
    <property type="entry name" value="Hexapep"/>
    <property type="match status" value="1"/>
</dbReference>
<dbReference type="Pfam" id="PF12804">
    <property type="entry name" value="NTP_transf_3"/>
    <property type="match status" value="1"/>
</dbReference>
<dbReference type="SUPFAM" id="SSF53448">
    <property type="entry name" value="Nucleotide-diphospho-sugar transferases"/>
    <property type="match status" value="1"/>
</dbReference>
<dbReference type="SUPFAM" id="SSF51161">
    <property type="entry name" value="Trimeric LpxA-like enzymes"/>
    <property type="match status" value="1"/>
</dbReference>
<protein>
    <recommendedName>
        <fullName evidence="2">Bifunctional protein GlmU</fullName>
    </recommendedName>
    <domain>
        <recommendedName>
            <fullName evidence="2">UDP-N-acetylglucosamine pyrophosphorylase</fullName>
            <ecNumber evidence="2">2.7.7.23</ecNumber>
        </recommendedName>
        <alternativeName>
            <fullName evidence="2">N-acetylglucosamine-1-phosphate uridyltransferase</fullName>
        </alternativeName>
    </domain>
    <domain>
        <recommendedName>
            <fullName evidence="2">Glucosamine-1-phosphate N-acetyltransferase</fullName>
            <ecNumber evidence="2">2.3.1.157</ecNumber>
        </recommendedName>
    </domain>
</protein>
<keyword id="KW-0002">3D-structure</keyword>
<keyword id="KW-0012">Acyltransferase</keyword>
<keyword id="KW-0133">Cell shape</keyword>
<keyword id="KW-0961">Cell wall biogenesis/degradation</keyword>
<keyword id="KW-0963">Cytoplasm</keyword>
<keyword id="KW-0460">Magnesium</keyword>
<keyword id="KW-0479">Metal-binding</keyword>
<keyword id="KW-0511">Multifunctional enzyme</keyword>
<keyword id="KW-0548">Nucleotidyltransferase</keyword>
<keyword id="KW-0573">Peptidoglycan synthesis</keyword>
<keyword id="KW-1185">Reference proteome</keyword>
<keyword id="KW-0677">Repeat</keyword>
<keyword id="KW-0808">Transferase</keyword>
<comment type="function">
    <text evidence="2">Catalyzes the last two sequential reactions in the de novo biosynthetic pathway for UDP-N-acetylglucosamine (UDP-GlcNAc). The C-terminal domain catalyzes the transfer of acetyl group from acetyl coenzyme A to glucosamine-1-phosphate (GlcN-1-P) to produce N-acetylglucosamine-1-phosphate (GlcNAc-1-P), which is converted into UDP-GlcNAc by the transfer of uridine 5-monophosphate (from uridine 5-triphosphate), a reaction catalyzed by the N-terminal domain.</text>
</comment>
<comment type="catalytic activity">
    <reaction evidence="2">
        <text>alpha-D-glucosamine 1-phosphate + acetyl-CoA = N-acetyl-alpha-D-glucosamine 1-phosphate + CoA + H(+)</text>
        <dbReference type="Rhea" id="RHEA:13725"/>
        <dbReference type="ChEBI" id="CHEBI:15378"/>
        <dbReference type="ChEBI" id="CHEBI:57287"/>
        <dbReference type="ChEBI" id="CHEBI:57288"/>
        <dbReference type="ChEBI" id="CHEBI:57776"/>
        <dbReference type="ChEBI" id="CHEBI:58516"/>
        <dbReference type="EC" id="2.3.1.157"/>
    </reaction>
</comment>
<comment type="catalytic activity">
    <reaction evidence="2">
        <text>N-acetyl-alpha-D-glucosamine 1-phosphate + UTP + H(+) = UDP-N-acetyl-alpha-D-glucosamine + diphosphate</text>
        <dbReference type="Rhea" id="RHEA:13509"/>
        <dbReference type="ChEBI" id="CHEBI:15378"/>
        <dbReference type="ChEBI" id="CHEBI:33019"/>
        <dbReference type="ChEBI" id="CHEBI:46398"/>
        <dbReference type="ChEBI" id="CHEBI:57705"/>
        <dbReference type="ChEBI" id="CHEBI:57776"/>
        <dbReference type="EC" id="2.7.7.23"/>
    </reaction>
</comment>
<comment type="cofactor">
    <cofactor evidence="1 2">
        <name>Mg(2+)</name>
        <dbReference type="ChEBI" id="CHEBI:18420"/>
    </cofactor>
    <text evidence="1 2">Binds 1 Mg(2+) ion per subunit.</text>
</comment>
<comment type="pathway">
    <text evidence="2">Nucleotide-sugar biosynthesis; UDP-N-acetyl-alpha-D-glucosamine biosynthesis; N-acetyl-alpha-D-glucosamine 1-phosphate from alpha-D-glucosamine 6-phosphate (route II): step 2/2.</text>
</comment>
<comment type="pathway">
    <text evidence="2">Nucleotide-sugar biosynthesis; UDP-N-acetyl-alpha-D-glucosamine biosynthesis; UDP-N-acetyl-alpha-D-glucosamine from N-acetyl-alpha-D-glucosamine 1-phosphate: step 1/1.</text>
</comment>
<comment type="pathway">
    <text evidence="2">Bacterial outer membrane biogenesis; LPS lipid A biosynthesis.</text>
</comment>
<comment type="subunit">
    <text evidence="1 2">Homotrimer.</text>
</comment>
<comment type="subcellular location">
    <subcellularLocation>
        <location evidence="1 2">Cytoplasm</location>
    </subcellularLocation>
</comment>
<comment type="similarity">
    <text evidence="2 4">In the N-terminal section; belongs to the N-acetylglucosamine-1-phosphate uridyltransferase family.</text>
</comment>
<comment type="similarity">
    <text evidence="2 4">In the C-terminal section; belongs to the transferase hexapeptide repeat family.</text>
</comment>
<proteinExistence type="evidence at protein level"/>
<gene>
    <name evidence="2" type="primary">glmU</name>
    <name type="ordered locus">MRA_1026</name>
</gene>
<evidence type="ECO:0000250" key="1"/>
<evidence type="ECO:0000255" key="2">
    <source>
        <dbReference type="HAMAP-Rule" id="MF_01631"/>
    </source>
</evidence>
<evidence type="ECO:0000256" key="3">
    <source>
        <dbReference type="SAM" id="MobiDB-lite"/>
    </source>
</evidence>
<evidence type="ECO:0000305" key="4"/>
<evidence type="ECO:0007829" key="5">
    <source>
        <dbReference type="PDB" id="3DK5"/>
    </source>
</evidence>
<accession>A5U161</accession>